<accession>Q6FJD1</accession>
<name>LPE10_CANGA</name>
<feature type="transit peptide" description="Mitochondrion" evidence="2">
    <location>
        <begin position="1"/>
        <end position="37"/>
    </location>
</feature>
<feature type="chain" id="PRO_0000043237" description="Mitochondrial inner membrane magnesium transporter LPE10">
    <location>
        <begin position="38"/>
        <end position="397"/>
    </location>
</feature>
<feature type="transmembrane region" description="Helical" evidence="2">
    <location>
        <begin position="316"/>
        <end position="336"/>
    </location>
</feature>
<feature type="transmembrane region" description="Helical" evidence="2">
    <location>
        <begin position="354"/>
        <end position="374"/>
    </location>
</feature>
<feature type="short sequence motif" description="YGMN">
    <location>
        <begin position="340"/>
        <end position="343"/>
    </location>
</feature>
<dbReference type="EMBL" id="CR380959">
    <property type="protein sequence ID" value="CAG62639.1"/>
    <property type="molecule type" value="Genomic_DNA"/>
</dbReference>
<dbReference type="RefSeq" id="XP_449663.1">
    <property type="nucleotide sequence ID" value="XM_449663.1"/>
</dbReference>
<dbReference type="SMR" id="Q6FJD1"/>
<dbReference type="FunCoup" id="Q6FJD1">
    <property type="interactions" value="350"/>
</dbReference>
<dbReference type="EnsemblFungi" id="CAGL0M07249g-T">
    <property type="protein sequence ID" value="CAGL0M07249g-T-p1"/>
    <property type="gene ID" value="CAGL0M07249g"/>
</dbReference>
<dbReference type="KEGG" id="cgr:2891712"/>
<dbReference type="CGD" id="CAL0136217">
    <property type="gene designation" value="CAGL0M07249g"/>
</dbReference>
<dbReference type="VEuPathDB" id="FungiDB:B1J91_M07249g"/>
<dbReference type="VEuPathDB" id="FungiDB:CAGL0M07249g"/>
<dbReference type="eggNOG" id="KOG2662">
    <property type="taxonomic scope" value="Eukaryota"/>
</dbReference>
<dbReference type="HOGENOM" id="CLU_025144_1_0_1"/>
<dbReference type="InParanoid" id="Q6FJD1"/>
<dbReference type="OMA" id="TRNNCII"/>
<dbReference type="Proteomes" id="UP000002428">
    <property type="component" value="Chromosome M"/>
</dbReference>
<dbReference type="GO" id="GO:0005743">
    <property type="term" value="C:mitochondrial inner membrane"/>
    <property type="evidence" value="ECO:0007669"/>
    <property type="project" value="UniProtKB-SubCell"/>
</dbReference>
<dbReference type="GO" id="GO:0015095">
    <property type="term" value="F:magnesium ion transmembrane transporter activity"/>
    <property type="evidence" value="ECO:0007669"/>
    <property type="project" value="EnsemblFungi"/>
</dbReference>
<dbReference type="GO" id="GO:0045016">
    <property type="term" value="P:mitochondrial magnesium ion transmembrane transport"/>
    <property type="evidence" value="ECO:0007669"/>
    <property type="project" value="EnsemblFungi"/>
</dbReference>
<dbReference type="CDD" id="cd12823">
    <property type="entry name" value="Mrs2_Mfm1p-like"/>
    <property type="match status" value="1"/>
</dbReference>
<dbReference type="FunFam" id="2.40.128.330:FF:000002">
    <property type="entry name" value="Inner membrane magnesium transporter mrs2"/>
    <property type="match status" value="1"/>
</dbReference>
<dbReference type="Gene3D" id="2.40.128.330">
    <property type="match status" value="1"/>
</dbReference>
<dbReference type="Gene3D" id="1.20.58.340">
    <property type="entry name" value="Magnesium transport protein CorA, transmembrane region"/>
    <property type="match status" value="1"/>
</dbReference>
<dbReference type="InterPro" id="IPR039204">
    <property type="entry name" value="MRS2-like"/>
</dbReference>
<dbReference type="PANTHER" id="PTHR13890:SF0">
    <property type="entry name" value="MAGNESIUM TRANSPORTER MRS2 HOMOLOG, MITOCHONDRIAL"/>
    <property type="match status" value="1"/>
</dbReference>
<dbReference type="PANTHER" id="PTHR13890">
    <property type="entry name" value="RNA SPLICING PROTEIN MRS2, MITOCHONDRIAL"/>
    <property type="match status" value="1"/>
</dbReference>
<dbReference type="Pfam" id="PF22099">
    <property type="entry name" value="MRS2-like"/>
    <property type="match status" value="1"/>
</dbReference>
<comment type="function">
    <text evidence="1">Mitochondrial inner membrane magnesium transporter required for mitochondrial magnesium homeostasis. Modulates the conductance of the MRS2 channel. Involved in the splicing of mRNA group II introns in mitochondria by affecting mitochondrial magnesium concentrations, which are critical for group II intron splicing.</text>
</comment>
<comment type="subunit">
    <text evidence="1">Forms homooligomers. Interacts with MRS2.</text>
</comment>
<comment type="subcellular location">
    <subcellularLocation>
        <location evidence="1">Mitochondrion inner membrane</location>
        <topology evidence="1">Multi-pass membrane protein</topology>
    </subcellularLocation>
</comment>
<comment type="similarity">
    <text evidence="3">Belongs to the CorA metal ion transporter (MIT) (TC 1.A.35) family.</text>
</comment>
<reference key="1">
    <citation type="journal article" date="2004" name="Nature">
        <title>Genome evolution in yeasts.</title>
        <authorList>
            <person name="Dujon B."/>
            <person name="Sherman D."/>
            <person name="Fischer G."/>
            <person name="Durrens P."/>
            <person name="Casaregola S."/>
            <person name="Lafontaine I."/>
            <person name="de Montigny J."/>
            <person name="Marck C."/>
            <person name="Neuveglise C."/>
            <person name="Talla E."/>
            <person name="Goffard N."/>
            <person name="Frangeul L."/>
            <person name="Aigle M."/>
            <person name="Anthouard V."/>
            <person name="Babour A."/>
            <person name="Barbe V."/>
            <person name="Barnay S."/>
            <person name="Blanchin S."/>
            <person name="Beckerich J.-M."/>
            <person name="Beyne E."/>
            <person name="Bleykasten C."/>
            <person name="Boisrame A."/>
            <person name="Boyer J."/>
            <person name="Cattolico L."/>
            <person name="Confanioleri F."/>
            <person name="de Daruvar A."/>
            <person name="Despons L."/>
            <person name="Fabre E."/>
            <person name="Fairhead C."/>
            <person name="Ferry-Dumazet H."/>
            <person name="Groppi A."/>
            <person name="Hantraye F."/>
            <person name="Hennequin C."/>
            <person name="Jauniaux N."/>
            <person name="Joyet P."/>
            <person name="Kachouri R."/>
            <person name="Kerrest A."/>
            <person name="Koszul R."/>
            <person name="Lemaire M."/>
            <person name="Lesur I."/>
            <person name="Ma L."/>
            <person name="Muller H."/>
            <person name="Nicaud J.-M."/>
            <person name="Nikolski M."/>
            <person name="Oztas S."/>
            <person name="Ozier-Kalogeropoulos O."/>
            <person name="Pellenz S."/>
            <person name="Potier S."/>
            <person name="Richard G.-F."/>
            <person name="Straub M.-L."/>
            <person name="Suleau A."/>
            <person name="Swennen D."/>
            <person name="Tekaia F."/>
            <person name="Wesolowski-Louvel M."/>
            <person name="Westhof E."/>
            <person name="Wirth B."/>
            <person name="Zeniou-Meyer M."/>
            <person name="Zivanovic Y."/>
            <person name="Bolotin-Fukuhara M."/>
            <person name="Thierry A."/>
            <person name="Bouchier C."/>
            <person name="Caudron B."/>
            <person name="Scarpelli C."/>
            <person name="Gaillardin C."/>
            <person name="Weissenbach J."/>
            <person name="Wincker P."/>
            <person name="Souciet J.-L."/>
        </authorList>
    </citation>
    <scope>NUCLEOTIDE SEQUENCE [LARGE SCALE GENOMIC DNA]</scope>
    <source>
        <strain>ATCC 2001 / BCRC 20586 / JCM 3761 / NBRC 0622 / NRRL Y-65 / CBS 138</strain>
    </source>
</reference>
<sequence length="397" mass="45159">MLLVNRAITLNLVKRCCWRSTMFMTPKRFLGTSEEESTAALLLQKNLIQRNNMLYGHGSGTIRCTVFDAGGNIVSPALDIKREELVAKHGLLPRDLRKIEKSRKNDLVPSFLVRKNGILVSLATIKTLIKPDMVIVFDSFGSLNSTSHKAFLNSLKLRLQNLDMVELKKDPLPYEFRALESIFISALSNLTSEMNVQVTICKGILQDLEYSITRDKLKFLLGQNKKLSNFYKKTVLIRDMLDDLLEQSDVLCSMYLSDLKNGVEHKDDDHSEIEMLLETYHNHLDEIVQITENIISNVKTTEEIINIILDSNRNQLMLLGIRFSIGMLSLGGPIFIGSLYGMNLENFIEETDYGFIAASAIGMISLGALYFYSIKHLHKLQKMSLFNYTNYARDVKK</sequence>
<organism>
    <name type="scientific">Candida glabrata (strain ATCC 2001 / BCRC 20586 / JCM 3761 / NBRC 0622 / NRRL Y-65 / CBS 138)</name>
    <name type="common">Yeast</name>
    <name type="synonym">Nakaseomyces glabratus</name>
    <dbReference type="NCBI Taxonomy" id="284593"/>
    <lineage>
        <taxon>Eukaryota</taxon>
        <taxon>Fungi</taxon>
        <taxon>Dikarya</taxon>
        <taxon>Ascomycota</taxon>
        <taxon>Saccharomycotina</taxon>
        <taxon>Saccharomycetes</taxon>
        <taxon>Saccharomycetales</taxon>
        <taxon>Saccharomycetaceae</taxon>
        <taxon>Nakaseomyces</taxon>
    </lineage>
</organism>
<keyword id="KW-0406">Ion transport</keyword>
<keyword id="KW-0460">Magnesium</keyword>
<keyword id="KW-0472">Membrane</keyword>
<keyword id="KW-0496">Mitochondrion</keyword>
<keyword id="KW-0999">Mitochondrion inner membrane</keyword>
<keyword id="KW-1185">Reference proteome</keyword>
<keyword id="KW-0809">Transit peptide</keyword>
<keyword id="KW-0812">Transmembrane</keyword>
<keyword id="KW-1133">Transmembrane helix</keyword>
<keyword id="KW-0813">Transport</keyword>
<protein>
    <recommendedName>
        <fullName>Mitochondrial inner membrane magnesium transporter LPE10</fullName>
    </recommendedName>
</protein>
<gene>
    <name type="primary">LPE10</name>
    <name type="ordered locus">CAGL0M07249g</name>
</gene>
<evidence type="ECO:0000250" key="1">
    <source>
        <dbReference type="UniProtKB" id="Q02783"/>
    </source>
</evidence>
<evidence type="ECO:0000255" key="2"/>
<evidence type="ECO:0000305" key="3"/>
<proteinExistence type="inferred from homology"/>